<keyword id="KW-0143">Chaperone</keyword>
<keyword id="KW-0963">Cytoplasm</keyword>
<keyword id="KW-0235">DNA replication</keyword>
<keyword id="KW-0479">Metal-binding</keyword>
<keyword id="KW-0677">Repeat</keyword>
<keyword id="KW-0346">Stress response</keyword>
<keyword id="KW-0862">Zinc</keyword>
<keyword id="KW-0863">Zinc-finger</keyword>
<gene>
    <name evidence="1" type="primary">dnaJ</name>
    <name type="ordered locus">PC1_3658</name>
</gene>
<evidence type="ECO:0000255" key="1">
    <source>
        <dbReference type="HAMAP-Rule" id="MF_01152"/>
    </source>
</evidence>
<proteinExistence type="inferred from homology"/>
<protein>
    <recommendedName>
        <fullName evidence="1">Chaperone protein DnaJ</fullName>
    </recommendedName>
</protein>
<organism>
    <name type="scientific">Pectobacterium carotovorum subsp. carotovorum (strain PC1)</name>
    <dbReference type="NCBI Taxonomy" id="561230"/>
    <lineage>
        <taxon>Bacteria</taxon>
        <taxon>Pseudomonadati</taxon>
        <taxon>Pseudomonadota</taxon>
        <taxon>Gammaproteobacteria</taxon>
        <taxon>Enterobacterales</taxon>
        <taxon>Pectobacteriaceae</taxon>
        <taxon>Pectobacterium</taxon>
    </lineage>
</organism>
<reference key="1">
    <citation type="submission" date="2009-07" db="EMBL/GenBank/DDBJ databases">
        <title>Complete sequence of Pectobacterium carotovorum subsp. carotovorum PC1.</title>
        <authorList>
            <consortium name="US DOE Joint Genome Institute"/>
            <person name="Lucas S."/>
            <person name="Copeland A."/>
            <person name="Lapidus A."/>
            <person name="Glavina del Rio T."/>
            <person name="Tice H."/>
            <person name="Bruce D."/>
            <person name="Goodwin L."/>
            <person name="Pitluck S."/>
            <person name="Munk A.C."/>
            <person name="Brettin T."/>
            <person name="Detter J.C."/>
            <person name="Han C."/>
            <person name="Tapia R."/>
            <person name="Larimer F."/>
            <person name="Land M."/>
            <person name="Hauser L."/>
            <person name="Kyrpides N."/>
            <person name="Mikhailova N."/>
            <person name="Balakrishnan V."/>
            <person name="Glasner J."/>
            <person name="Perna N.T."/>
        </authorList>
    </citation>
    <scope>NUCLEOTIDE SEQUENCE [LARGE SCALE GENOMIC DNA]</scope>
    <source>
        <strain>PC1</strain>
    </source>
</reference>
<dbReference type="EMBL" id="CP001657">
    <property type="protein sequence ID" value="ACT14673.1"/>
    <property type="molecule type" value="Genomic_DNA"/>
</dbReference>
<dbReference type="RefSeq" id="WP_015841788.1">
    <property type="nucleotide sequence ID" value="NC_012917.1"/>
</dbReference>
<dbReference type="SMR" id="C6DF09"/>
<dbReference type="STRING" id="561230.PC1_3658"/>
<dbReference type="KEGG" id="pct:PC1_3658"/>
<dbReference type="eggNOG" id="COG0484">
    <property type="taxonomic scope" value="Bacteria"/>
</dbReference>
<dbReference type="HOGENOM" id="CLU_017633_0_7_6"/>
<dbReference type="OrthoDB" id="9779889at2"/>
<dbReference type="Proteomes" id="UP000002736">
    <property type="component" value="Chromosome"/>
</dbReference>
<dbReference type="GO" id="GO:0005737">
    <property type="term" value="C:cytoplasm"/>
    <property type="evidence" value="ECO:0007669"/>
    <property type="project" value="UniProtKB-SubCell"/>
</dbReference>
<dbReference type="GO" id="GO:0005524">
    <property type="term" value="F:ATP binding"/>
    <property type="evidence" value="ECO:0007669"/>
    <property type="project" value="InterPro"/>
</dbReference>
<dbReference type="GO" id="GO:0031072">
    <property type="term" value="F:heat shock protein binding"/>
    <property type="evidence" value="ECO:0007669"/>
    <property type="project" value="InterPro"/>
</dbReference>
<dbReference type="GO" id="GO:0051082">
    <property type="term" value="F:unfolded protein binding"/>
    <property type="evidence" value="ECO:0007669"/>
    <property type="project" value="UniProtKB-UniRule"/>
</dbReference>
<dbReference type="GO" id="GO:0008270">
    <property type="term" value="F:zinc ion binding"/>
    <property type="evidence" value="ECO:0007669"/>
    <property type="project" value="UniProtKB-UniRule"/>
</dbReference>
<dbReference type="GO" id="GO:0051085">
    <property type="term" value="P:chaperone cofactor-dependent protein refolding"/>
    <property type="evidence" value="ECO:0007669"/>
    <property type="project" value="TreeGrafter"/>
</dbReference>
<dbReference type="GO" id="GO:0006260">
    <property type="term" value="P:DNA replication"/>
    <property type="evidence" value="ECO:0007669"/>
    <property type="project" value="UniProtKB-KW"/>
</dbReference>
<dbReference type="GO" id="GO:0042026">
    <property type="term" value="P:protein refolding"/>
    <property type="evidence" value="ECO:0007669"/>
    <property type="project" value="TreeGrafter"/>
</dbReference>
<dbReference type="GO" id="GO:0009408">
    <property type="term" value="P:response to heat"/>
    <property type="evidence" value="ECO:0007669"/>
    <property type="project" value="InterPro"/>
</dbReference>
<dbReference type="CDD" id="cd06257">
    <property type="entry name" value="DnaJ"/>
    <property type="match status" value="1"/>
</dbReference>
<dbReference type="CDD" id="cd10747">
    <property type="entry name" value="DnaJ_C"/>
    <property type="match status" value="1"/>
</dbReference>
<dbReference type="CDD" id="cd10719">
    <property type="entry name" value="DnaJ_zf"/>
    <property type="match status" value="1"/>
</dbReference>
<dbReference type="FunFam" id="1.10.287.110:FF:000003">
    <property type="entry name" value="Molecular chaperone DnaJ"/>
    <property type="match status" value="1"/>
</dbReference>
<dbReference type="FunFam" id="2.10.230.10:FF:000002">
    <property type="entry name" value="Molecular chaperone DnaJ"/>
    <property type="match status" value="1"/>
</dbReference>
<dbReference type="FunFam" id="2.60.260.20:FF:000004">
    <property type="entry name" value="Molecular chaperone DnaJ"/>
    <property type="match status" value="1"/>
</dbReference>
<dbReference type="Gene3D" id="1.10.287.110">
    <property type="entry name" value="DnaJ domain"/>
    <property type="match status" value="1"/>
</dbReference>
<dbReference type="Gene3D" id="2.10.230.10">
    <property type="entry name" value="Heat shock protein DnaJ, cysteine-rich domain"/>
    <property type="match status" value="1"/>
</dbReference>
<dbReference type="Gene3D" id="2.60.260.20">
    <property type="entry name" value="Urease metallochaperone UreE, N-terminal domain"/>
    <property type="match status" value="2"/>
</dbReference>
<dbReference type="HAMAP" id="MF_01152">
    <property type="entry name" value="DnaJ"/>
    <property type="match status" value="1"/>
</dbReference>
<dbReference type="InterPro" id="IPR012724">
    <property type="entry name" value="DnaJ"/>
</dbReference>
<dbReference type="InterPro" id="IPR002939">
    <property type="entry name" value="DnaJ_C"/>
</dbReference>
<dbReference type="InterPro" id="IPR001623">
    <property type="entry name" value="DnaJ_domain"/>
</dbReference>
<dbReference type="InterPro" id="IPR018253">
    <property type="entry name" value="DnaJ_domain_CS"/>
</dbReference>
<dbReference type="InterPro" id="IPR008971">
    <property type="entry name" value="HSP40/DnaJ_pept-bd"/>
</dbReference>
<dbReference type="InterPro" id="IPR001305">
    <property type="entry name" value="HSP_DnaJ_Cys-rich_dom"/>
</dbReference>
<dbReference type="InterPro" id="IPR036410">
    <property type="entry name" value="HSP_DnaJ_Cys-rich_dom_sf"/>
</dbReference>
<dbReference type="InterPro" id="IPR036869">
    <property type="entry name" value="J_dom_sf"/>
</dbReference>
<dbReference type="NCBIfam" id="TIGR02349">
    <property type="entry name" value="DnaJ_bact"/>
    <property type="match status" value="1"/>
</dbReference>
<dbReference type="NCBIfam" id="NF008035">
    <property type="entry name" value="PRK10767.1"/>
    <property type="match status" value="1"/>
</dbReference>
<dbReference type="PANTHER" id="PTHR43096:SF48">
    <property type="entry name" value="CHAPERONE PROTEIN DNAJ"/>
    <property type="match status" value="1"/>
</dbReference>
<dbReference type="PANTHER" id="PTHR43096">
    <property type="entry name" value="DNAJ HOMOLOG 1, MITOCHONDRIAL-RELATED"/>
    <property type="match status" value="1"/>
</dbReference>
<dbReference type="Pfam" id="PF00226">
    <property type="entry name" value="DnaJ"/>
    <property type="match status" value="1"/>
</dbReference>
<dbReference type="Pfam" id="PF01556">
    <property type="entry name" value="DnaJ_C"/>
    <property type="match status" value="1"/>
</dbReference>
<dbReference type="Pfam" id="PF00684">
    <property type="entry name" value="DnaJ_CXXCXGXG"/>
    <property type="match status" value="1"/>
</dbReference>
<dbReference type="PRINTS" id="PR00625">
    <property type="entry name" value="JDOMAIN"/>
</dbReference>
<dbReference type="SMART" id="SM00271">
    <property type="entry name" value="DnaJ"/>
    <property type="match status" value="1"/>
</dbReference>
<dbReference type="SUPFAM" id="SSF46565">
    <property type="entry name" value="Chaperone J-domain"/>
    <property type="match status" value="1"/>
</dbReference>
<dbReference type="SUPFAM" id="SSF57938">
    <property type="entry name" value="DnaJ/Hsp40 cysteine-rich domain"/>
    <property type="match status" value="1"/>
</dbReference>
<dbReference type="SUPFAM" id="SSF49493">
    <property type="entry name" value="HSP40/DnaJ peptide-binding domain"/>
    <property type="match status" value="2"/>
</dbReference>
<dbReference type="PROSITE" id="PS00636">
    <property type="entry name" value="DNAJ_1"/>
    <property type="match status" value="1"/>
</dbReference>
<dbReference type="PROSITE" id="PS50076">
    <property type="entry name" value="DNAJ_2"/>
    <property type="match status" value="1"/>
</dbReference>
<dbReference type="PROSITE" id="PS51188">
    <property type="entry name" value="ZF_CR"/>
    <property type="match status" value="1"/>
</dbReference>
<accession>C6DF09</accession>
<comment type="function">
    <text evidence="1">Participates actively in the response to hyperosmotic and heat shock by preventing the aggregation of stress-denatured proteins and by disaggregating proteins, also in an autonomous, DnaK-independent fashion. Unfolded proteins bind initially to DnaJ; upon interaction with the DnaJ-bound protein, DnaK hydrolyzes its bound ATP, resulting in the formation of a stable complex. GrpE releases ADP from DnaK; ATP binding to DnaK triggers the release of the substrate protein, thus completing the reaction cycle. Several rounds of ATP-dependent interactions between DnaJ, DnaK and GrpE are required for fully efficient folding. Also involved, together with DnaK and GrpE, in the DNA replication of plasmids through activation of initiation proteins.</text>
</comment>
<comment type="cofactor">
    <cofactor evidence="1">
        <name>Zn(2+)</name>
        <dbReference type="ChEBI" id="CHEBI:29105"/>
    </cofactor>
    <text evidence="1">Binds 2 Zn(2+) ions per monomer.</text>
</comment>
<comment type="subunit">
    <text evidence="1">Homodimer.</text>
</comment>
<comment type="subcellular location">
    <subcellularLocation>
        <location evidence="1">Cytoplasm</location>
    </subcellularLocation>
</comment>
<comment type="domain">
    <text evidence="1">The J domain is necessary and sufficient to stimulate DnaK ATPase activity. Zinc center 1 plays an important role in the autonomous, DnaK-independent chaperone activity of DnaJ. Zinc center 2 is essential for interaction with DnaK and for DnaJ activity.</text>
</comment>
<comment type="similarity">
    <text evidence="1">Belongs to the DnaJ family.</text>
</comment>
<name>DNAJ_PECCP</name>
<sequence>MAKQDYYESLGVAKSADEREIKKAYKRLAMKYHPDRNPGDSEAEAKFKEIKEAYEILIDSQKRAAYDQYGHAAFEQGGMGGSGGGFGGGGADFGDIFGDVFGDIFGGGRRQRASRGSDLRYNMELTLEEAVRGVTKEIRIPALEECDVCHGNGAKPGSSPITCPTCHGNGQVQMRQGFFTVQQACPHCHGRGKIIKDPCVKCHGHGRVEKSKTLSVKIPAGVDTGDRIRLSGEGEAGEHGAPSGDLYVQVQVKAHPIFQREENNLYCEVPINFAMAALGGEIEVPTLDGRVKLKVPAETQTGKLFRMRGKGVKSVRGGAQGDLLCRVVVETPVNLNERQRQLLQELDESFGGPSGERNSPRSKSFFDGVKKFFDDLTR</sequence>
<feature type="chain" id="PRO_1000213688" description="Chaperone protein DnaJ">
    <location>
        <begin position="1"/>
        <end position="378"/>
    </location>
</feature>
<feature type="domain" description="J" evidence="1">
    <location>
        <begin position="5"/>
        <end position="70"/>
    </location>
</feature>
<feature type="repeat" description="CXXCXGXG motif">
    <location>
        <begin position="146"/>
        <end position="153"/>
    </location>
</feature>
<feature type="repeat" description="CXXCXGXG motif">
    <location>
        <begin position="163"/>
        <end position="170"/>
    </location>
</feature>
<feature type="repeat" description="CXXCXGXG motif">
    <location>
        <begin position="185"/>
        <end position="192"/>
    </location>
</feature>
<feature type="repeat" description="CXXCXGXG motif">
    <location>
        <begin position="199"/>
        <end position="206"/>
    </location>
</feature>
<feature type="zinc finger region" description="CR-type" evidence="1">
    <location>
        <begin position="133"/>
        <end position="211"/>
    </location>
</feature>
<feature type="binding site" evidence="1">
    <location>
        <position position="146"/>
    </location>
    <ligand>
        <name>Zn(2+)</name>
        <dbReference type="ChEBI" id="CHEBI:29105"/>
        <label>1</label>
    </ligand>
</feature>
<feature type="binding site" evidence="1">
    <location>
        <position position="149"/>
    </location>
    <ligand>
        <name>Zn(2+)</name>
        <dbReference type="ChEBI" id="CHEBI:29105"/>
        <label>1</label>
    </ligand>
</feature>
<feature type="binding site" evidence="1">
    <location>
        <position position="163"/>
    </location>
    <ligand>
        <name>Zn(2+)</name>
        <dbReference type="ChEBI" id="CHEBI:29105"/>
        <label>2</label>
    </ligand>
</feature>
<feature type="binding site" evidence="1">
    <location>
        <position position="166"/>
    </location>
    <ligand>
        <name>Zn(2+)</name>
        <dbReference type="ChEBI" id="CHEBI:29105"/>
        <label>2</label>
    </ligand>
</feature>
<feature type="binding site" evidence="1">
    <location>
        <position position="185"/>
    </location>
    <ligand>
        <name>Zn(2+)</name>
        <dbReference type="ChEBI" id="CHEBI:29105"/>
        <label>2</label>
    </ligand>
</feature>
<feature type="binding site" evidence="1">
    <location>
        <position position="188"/>
    </location>
    <ligand>
        <name>Zn(2+)</name>
        <dbReference type="ChEBI" id="CHEBI:29105"/>
        <label>2</label>
    </ligand>
</feature>
<feature type="binding site" evidence="1">
    <location>
        <position position="199"/>
    </location>
    <ligand>
        <name>Zn(2+)</name>
        <dbReference type="ChEBI" id="CHEBI:29105"/>
        <label>1</label>
    </ligand>
</feature>
<feature type="binding site" evidence="1">
    <location>
        <position position="202"/>
    </location>
    <ligand>
        <name>Zn(2+)</name>
        <dbReference type="ChEBI" id="CHEBI:29105"/>
        <label>1</label>
    </ligand>
</feature>